<comment type="catalytic activity">
    <reaction evidence="1">
        <text>2-(N(omega)-L-arginino)succinate = fumarate + L-arginine</text>
        <dbReference type="Rhea" id="RHEA:24020"/>
        <dbReference type="ChEBI" id="CHEBI:29806"/>
        <dbReference type="ChEBI" id="CHEBI:32682"/>
        <dbReference type="ChEBI" id="CHEBI:57472"/>
        <dbReference type="EC" id="4.3.2.1"/>
    </reaction>
</comment>
<comment type="pathway">
    <text evidence="1">Amino-acid biosynthesis; L-arginine biosynthesis; L-arginine from L-ornithine and carbamoyl phosphate: step 3/3.</text>
</comment>
<comment type="subcellular location">
    <subcellularLocation>
        <location evidence="1">Cytoplasm</location>
    </subcellularLocation>
</comment>
<comment type="similarity">
    <text evidence="1">Belongs to the lyase 1 family. Argininosuccinate lyase subfamily.</text>
</comment>
<dbReference type="EC" id="4.3.2.1" evidence="1"/>
<dbReference type="EMBL" id="CP000857">
    <property type="protein sequence ID" value="ACN48295.1"/>
    <property type="molecule type" value="Genomic_DNA"/>
</dbReference>
<dbReference type="RefSeq" id="WP_001230055.1">
    <property type="nucleotide sequence ID" value="NC_012125.1"/>
</dbReference>
<dbReference type="SMR" id="C0Q476"/>
<dbReference type="KEGG" id="sei:SPC_4232"/>
<dbReference type="HOGENOM" id="CLU_027272_2_3_6"/>
<dbReference type="UniPathway" id="UPA00068">
    <property type="reaction ID" value="UER00114"/>
</dbReference>
<dbReference type="Proteomes" id="UP000001599">
    <property type="component" value="Chromosome"/>
</dbReference>
<dbReference type="GO" id="GO:0005829">
    <property type="term" value="C:cytosol"/>
    <property type="evidence" value="ECO:0007669"/>
    <property type="project" value="TreeGrafter"/>
</dbReference>
<dbReference type="GO" id="GO:0004056">
    <property type="term" value="F:argininosuccinate lyase activity"/>
    <property type="evidence" value="ECO:0007669"/>
    <property type="project" value="UniProtKB-UniRule"/>
</dbReference>
<dbReference type="GO" id="GO:0042450">
    <property type="term" value="P:arginine biosynthetic process via ornithine"/>
    <property type="evidence" value="ECO:0007669"/>
    <property type="project" value="InterPro"/>
</dbReference>
<dbReference type="GO" id="GO:0006526">
    <property type="term" value="P:L-arginine biosynthetic process"/>
    <property type="evidence" value="ECO:0007669"/>
    <property type="project" value="UniProtKB-UniRule"/>
</dbReference>
<dbReference type="CDD" id="cd01359">
    <property type="entry name" value="Argininosuccinate_lyase"/>
    <property type="match status" value="1"/>
</dbReference>
<dbReference type="FunFam" id="1.10.275.10:FF:000004">
    <property type="entry name" value="Argininosuccinate lyase"/>
    <property type="match status" value="1"/>
</dbReference>
<dbReference type="FunFam" id="1.10.40.30:FF:000001">
    <property type="entry name" value="Argininosuccinate lyase"/>
    <property type="match status" value="1"/>
</dbReference>
<dbReference type="FunFam" id="1.20.200.10:FF:000006">
    <property type="entry name" value="Argininosuccinate lyase"/>
    <property type="match status" value="1"/>
</dbReference>
<dbReference type="Gene3D" id="1.10.40.30">
    <property type="entry name" value="Fumarase/aspartase (C-terminal domain)"/>
    <property type="match status" value="1"/>
</dbReference>
<dbReference type="Gene3D" id="1.20.200.10">
    <property type="entry name" value="Fumarase/aspartase (Central domain)"/>
    <property type="match status" value="1"/>
</dbReference>
<dbReference type="Gene3D" id="1.10.275.10">
    <property type="entry name" value="Fumarase/aspartase (N-terminal domain)"/>
    <property type="match status" value="1"/>
</dbReference>
<dbReference type="HAMAP" id="MF_00006">
    <property type="entry name" value="Arg_succ_lyase"/>
    <property type="match status" value="1"/>
</dbReference>
<dbReference type="InterPro" id="IPR029419">
    <property type="entry name" value="Arg_succ_lyase_C"/>
</dbReference>
<dbReference type="InterPro" id="IPR009049">
    <property type="entry name" value="Argininosuccinate_lyase"/>
</dbReference>
<dbReference type="InterPro" id="IPR024083">
    <property type="entry name" value="Fumarase/histidase_N"/>
</dbReference>
<dbReference type="InterPro" id="IPR020557">
    <property type="entry name" value="Fumarate_lyase_CS"/>
</dbReference>
<dbReference type="InterPro" id="IPR000362">
    <property type="entry name" value="Fumarate_lyase_fam"/>
</dbReference>
<dbReference type="InterPro" id="IPR022761">
    <property type="entry name" value="Fumarate_lyase_N"/>
</dbReference>
<dbReference type="InterPro" id="IPR008948">
    <property type="entry name" value="L-Aspartase-like"/>
</dbReference>
<dbReference type="NCBIfam" id="TIGR00838">
    <property type="entry name" value="argH"/>
    <property type="match status" value="1"/>
</dbReference>
<dbReference type="NCBIfam" id="NF008964">
    <property type="entry name" value="PRK12308.1"/>
    <property type="match status" value="1"/>
</dbReference>
<dbReference type="PANTHER" id="PTHR43814">
    <property type="entry name" value="ARGININOSUCCINATE LYASE"/>
    <property type="match status" value="1"/>
</dbReference>
<dbReference type="PANTHER" id="PTHR43814:SF1">
    <property type="entry name" value="ARGININOSUCCINATE LYASE"/>
    <property type="match status" value="1"/>
</dbReference>
<dbReference type="Pfam" id="PF14698">
    <property type="entry name" value="ASL_C2"/>
    <property type="match status" value="1"/>
</dbReference>
<dbReference type="Pfam" id="PF00206">
    <property type="entry name" value="Lyase_1"/>
    <property type="match status" value="1"/>
</dbReference>
<dbReference type="PRINTS" id="PR00145">
    <property type="entry name" value="ARGSUCLYASE"/>
</dbReference>
<dbReference type="PRINTS" id="PR00149">
    <property type="entry name" value="FUMRATELYASE"/>
</dbReference>
<dbReference type="SUPFAM" id="SSF48557">
    <property type="entry name" value="L-aspartase-like"/>
    <property type="match status" value="1"/>
</dbReference>
<dbReference type="PROSITE" id="PS00163">
    <property type="entry name" value="FUMARATE_LYASES"/>
    <property type="match status" value="1"/>
</dbReference>
<proteinExistence type="inferred from homology"/>
<keyword id="KW-0028">Amino-acid biosynthesis</keyword>
<keyword id="KW-0055">Arginine biosynthesis</keyword>
<keyword id="KW-0963">Cytoplasm</keyword>
<keyword id="KW-0456">Lyase</keyword>
<gene>
    <name evidence="1" type="primary">argH</name>
    <name type="ordered locus">SPC_4232</name>
</gene>
<sequence>MALWGGRFTQAADQRFKQFNDSLRFDYRLAEQDIVGSVAWSKALVTVGVLTADEQRQLEEALNVLLEEVRANPQQILQSDAEDIHSWVEGKLIDKVGQLGKKLHTGRSRNDQVATDLKLWCKETVRELLTANRQLQSALVETAQANQDAVMPGYTHLQRAQPVTFAHWCLAYVEMLARDESRLQDTLKRLDVSPLGCGALAGTAYEIDREQLAGWLGFTSATRNSLDSVSDRDHVLELLSDAAIGMVHLSRFAEDLIFFNSGEAGFVELSDRVTSGSSLMPQKKNPDALELIRGKCGRVQGALTGMMMTLKGLPLAYNKDMQEDKEGLFDALDTWLDCLHMAALVLDGIQVKRPRCQDAAQQGYANATELADYLVAKGVPFREAHHIVGEAVVEAIRQGKPLEALPLADLQKFSRVIGDDVYPILSLQSCLDKRAAKGGVSPQQVAQAINDAKARLAL</sequence>
<reference key="1">
    <citation type="journal article" date="2009" name="PLoS ONE">
        <title>Salmonella paratyphi C: genetic divergence from Salmonella choleraesuis and pathogenic convergence with Salmonella typhi.</title>
        <authorList>
            <person name="Liu W.-Q."/>
            <person name="Feng Y."/>
            <person name="Wang Y."/>
            <person name="Zou Q.-H."/>
            <person name="Chen F."/>
            <person name="Guo J.-T."/>
            <person name="Peng Y.-H."/>
            <person name="Jin Y."/>
            <person name="Li Y.-G."/>
            <person name="Hu S.-N."/>
            <person name="Johnston R.N."/>
            <person name="Liu G.-R."/>
            <person name="Liu S.-L."/>
        </authorList>
    </citation>
    <scope>NUCLEOTIDE SEQUENCE [LARGE SCALE GENOMIC DNA]</scope>
    <source>
        <strain>RKS4594</strain>
    </source>
</reference>
<name>ARLY_SALPC</name>
<protein>
    <recommendedName>
        <fullName evidence="1">Argininosuccinate lyase</fullName>
        <shortName evidence="1">ASAL</shortName>
        <ecNumber evidence="1">4.3.2.1</ecNumber>
    </recommendedName>
    <alternativeName>
        <fullName evidence="1">Arginosuccinase</fullName>
    </alternativeName>
</protein>
<organism>
    <name type="scientific">Salmonella paratyphi C (strain RKS4594)</name>
    <dbReference type="NCBI Taxonomy" id="476213"/>
    <lineage>
        <taxon>Bacteria</taxon>
        <taxon>Pseudomonadati</taxon>
        <taxon>Pseudomonadota</taxon>
        <taxon>Gammaproteobacteria</taxon>
        <taxon>Enterobacterales</taxon>
        <taxon>Enterobacteriaceae</taxon>
        <taxon>Salmonella</taxon>
    </lineage>
</organism>
<evidence type="ECO:0000255" key="1">
    <source>
        <dbReference type="HAMAP-Rule" id="MF_00006"/>
    </source>
</evidence>
<feature type="chain" id="PRO_1000116342" description="Argininosuccinate lyase">
    <location>
        <begin position="1"/>
        <end position="458"/>
    </location>
</feature>
<accession>C0Q476</accession>